<feature type="chain" id="PRO_1000013118" description="Putative membrane protein insertion efficiency factor">
    <location>
        <begin position="1"/>
        <end position="84"/>
    </location>
</feature>
<feature type="region of interest" description="Disordered" evidence="2">
    <location>
        <begin position="63"/>
        <end position="84"/>
    </location>
</feature>
<feature type="compositionally biased region" description="Basic and acidic residues" evidence="2">
    <location>
        <begin position="75"/>
        <end position="84"/>
    </location>
</feature>
<evidence type="ECO:0000255" key="1">
    <source>
        <dbReference type="HAMAP-Rule" id="MF_00386"/>
    </source>
</evidence>
<evidence type="ECO:0000256" key="2">
    <source>
        <dbReference type="SAM" id="MobiDB-lite"/>
    </source>
</evidence>
<comment type="function">
    <text evidence="1">Could be involved in insertion of integral membrane proteins into the membrane.</text>
</comment>
<comment type="subcellular location">
    <subcellularLocation>
        <location evidence="1">Cell inner membrane</location>
        <topology evidence="1">Peripheral membrane protein</topology>
        <orientation evidence="1">Cytoplasmic side</orientation>
    </subcellularLocation>
</comment>
<comment type="similarity">
    <text evidence="1">Belongs to the UPF0161 family.</text>
</comment>
<keyword id="KW-0997">Cell inner membrane</keyword>
<keyword id="KW-1003">Cell membrane</keyword>
<keyword id="KW-0472">Membrane</keyword>
<accession>A4WNL6</accession>
<sequence length="84" mass="9333">MSPLAQIFALPVRAYRLLLSPWVGHGCRYQPTCSVYALEALERHGALKGGWLAARRILRCHPWGGSGYDPVPGADPEHDRRPRG</sequence>
<protein>
    <recommendedName>
        <fullName evidence="1">Putative membrane protein insertion efficiency factor</fullName>
    </recommendedName>
</protein>
<reference key="1">
    <citation type="submission" date="2007-04" db="EMBL/GenBank/DDBJ databases">
        <title>Complete sequence of chromosome of Rhodobacter sphaeroides ATCC 17025.</title>
        <authorList>
            <consortium name="US DOE Joint Genome Institute"/>
            <person name="Copeland A."/>
            <person name="Lucas S."/>
            <person name="Lapidus A."/>
            <person name="Barry K."/>
            <person name="Detter J.C."/>
            <person name="Glavina del Rio T."/>
            <person name="Hammon N."/>
            <person name="Israni S."/>
            <person name="Dalin E."/>
            <person name="Tice H."/>
            <person name="Pitluck S."/>
            <person name="Chertkov O."/>
            <person name="Brettin T."/>
            <person name="Bruce D."/>
            <person name="Han C."/>
            <person name="Schmutz J."/>
            <person name="Larimer F."/>
            <person name="Land M."/>
            <person name="Hauser L."/>
            <person name="Kyrpides N."/>
            <person name="Kim E."/>
            <person name="Richardson P."/>
            <person name="Mackenzie C."/>
            <person name="Choudhary M."/>
            <person name="Donohue T.J."/>
            <person name="Kaplan S."/>
        </authorList>
    </citation>
    <scope>NUCLEOTIDE SEQUENCE [LARGE SCALE GENOMIC DNA]</scope>
    <source>
        <strain>ATCC 17025 / ATH 2.4.3</strain>
    </source>
</reference>
<proteinExistence type="inferred from homology"/>
<name>YIDD_CERS5</name>
<gene>
    <name type="ordered locus">Rsph17025_0068</name>
</gene>
<dbReference type="EMBL" id="CP000661">
    <property type="protein sequence ID" value="ABP68980.1"/>
    <property type="molecule type" value="Genomic_DNA"/>
</dbReference>
<dbReference type="STRING" id="349102.Rsph17025_0068"/>
<dbReference type="KEGG" id="rsq:Rsph17025_0068"/>
<dbReference type="eggNOG" id="COG0759">
    <property type="taxonomic scope" value="Bacteria"/>
</dbReference>
<dbReference type="HOGENOM" id="CLU_144811_5_3_5"/>
<dbReference type="BioCyc" id="RSPH349102:G1G8M-67-MONOMER"/>
<dbReference type="GO" id="GO:0005886">
    <property type="term" value="C:plasma membrane"/>
    <property type="evidence" value="ECO:0007669"/>
    <property type="project" value="UniProtKB-SubCell"/>
</dbReference>
<dbReference type="HAMAP" id="MF_00386">
    <property type="entry name" value="UPF0161_YidD"/>
    <property type="match status" value="1"/>
</dbReference>
<dbReference type="InterPro" id="IPR002696">
    <property type="entry name" value="Membr_insert_effic_factor_YidD"/>
</dbReference>
<dbReference type="NCBIfam" id="TIGR00278">
    <property type="entry name" value="membrane protein insertion efficiency factor YidD"/>
    <property type="match status" value="1"/>
</dbReference>
<dbReference type="PANTHER" id="PTHR33383">
    <property type="entry name" value="MEMBRANE PROTEIN INSERTION EFFICIENCY FACTOR-RELATED"/>
    <property type="match status" value="1"/>
</dbReference>
<dbReference type="PANTHER" id="PTHR33383:SF1">
    <property type="entry name" value="MEMBRANE PROTEIN INSERTION EFFICIENCY FACTOR-RELATED"/>
    <property type="match status" value="1"/>
</dbReference>
<dbReference type="Pfam" id="PF01809">
    <property type="entry name" value="YidD"/>
    <property type="match status" value="1"/>
</dbReference>
<dbReference type="SMART" id="SM01234">
    <property type="entry name" value="Haemolytic"/>
    <property type="match status" value="1"/>
</dbReference>
<organism>
    <name type="scientific">Cereibacter sphaeroides (strain ATCC 17025 / ATH 2.4.3)</name>
    <name type="common">Rhodobacter sphaeroides</name>
    <dbReference type="NCBI Taxonomy" id="349102"/>
    <lineage>
        <taxon>Bacteria</taxon>
        <taxon>Pseudomonadati</taxon>
        <taxon>Pseudomonadota</taxon>
        <taxon>Alphaproteobacteria</taxon>
        <taxon>Rhodobacterales</taxon>
        <taxon>Paracoccaceae</taxon>
        <taxon>Cereibacter</taxon>
    </lineage>
</organism>